<gene>
    <name evidence="1" type="primary">pth</name>
    <name type="ordered locus">stu0005</name>
</gene>
<dbReference type="EC" id="3.1.1.29" evidence="1"/>
<dbReference type="EMBL" id="CP000023">
    <property type="protein sequence ID" value="AAV59735.1"/>
    <property type="molecule type" value="Genomic_DNA"/>
</dbReference>
<dbReference type="RefSeq" id="WP_002948591.1">
    <property type="nucleotide sequence ID" value="NC_006448.1"/>
</dbReference>
<dbReference type="SMR" id="Q5M6L4"/>
<dbReference type="STRING" id="264199.stu0005"/>
<dbReference type="GeneID" id="66897908"/>
<dbReference type="KEGG" id="stl:stu0005"/>
<dbReference type="eggNOG" id="COG0193">
    <property type="taxonomic scope" value="Bacteria"/>
</dbReference>
<dbReference type="HOGENOM" id="CLU_062456_4_1_9"/>
<dbReference type="Proteomes" id="UP000001170">
    <property type="component" value="Chromosome"/>
</dbReference>
<dbReference type="GO" id="GO:0005737">
    <property type="term" value="C:cytoplasm"/>
    <property type="evidence" value="ECO:0007669"/>
    <property type="project" value="UniProtKB-SubCell"/>
</dbReference>
<dbReference type="GO" id="GO:0004045">
    <property type="term" value="F:peptidyl-tRNA hydrolase activity"/>
    <property type="evidence" value="ECO:0007669"/>
    <property type="project" value="UniProtKB-UniRule"/>
</dbReference>
<dbReference type="GO" id="GO:0000049">
    <property type="term" value="F:tRNA binding"/>
    <property type="evidence" value="ECO:0007669"/>
    <property type="project" value="UniProtKB-UniRule"/>
</dbReference>
<dbReference type="GO" id="GO:0006515">
    <property type="term" value="P:protein quality control for misfolded or incompletely synthesized proteins"/>
    <property type="evidence" value="ECO:0007669"/>
    <property type="project" value="UniProtKB-UniRule"/>
</dbReference>
<dbReference type="GO" id="GO:0072344">
    <property type="term" value="P:rescue of stalled ribosome"/>
    <property type="evidence" value="ECO:0007669"/>
    <property type="project" value="UniProtKB-UniRule"/>
</dbReference>
<dbReference type="CDD" id="cd00462">
    <property type="entry name" value="PTH"/>
    <property type="match status" value="1"/>
</dbReference>
<dbReference type="FunFam" id="3.40.50.1470:FF:000001">
    <property type="entry name" value="Peptidyl-tRNA hydrolase"/>
    <property type="match status" value="1"/>
</dbReference>
<dbReference type="Gene3D" id="3.40.50.1470">
    <property type="entry name" value="Peptidyl-tRNA hydrolase"/>
    <property type="match status" value="1"/>
</dbReference>
<dbReference type="HAMAP" id="MF_00083">
    <property type="entry name" value="Pept_tRNA_hydro_bact"/>
    <property type="match status" value="1"/>
</dbReference>
<dbReference type="InterPro" id="IPR001328">
    <property type="entry name" value="Pept_tRNA_hydro"/>
</dbReference>
<dbReference type="InterPro" id="IPR018171">
    <property type="entry name" value="Pept_tRNA_hydro_CS"/>
</dbReference>
<dbReference type="InterPro" id="IPR036416">
    <property type="entry name" value="Pept_tRNA_hydro_sf"/>
</dbReference>
<dbReference type="NCBIfam" id="TIGR00447">
    <property type="entry name" value="pth"/>
    <property type="match status" value="1"/>
</dbReference>
<dbReference type="PANTHER" id="PTHR17224">
    <property type="entry name" value="PEPTIDYL-TRNA HYDROLASE"/>
    <property type="match status" value="1"/>
</dbReference>
<dbReference type="PANTHER" id="PTHR17224:SF1">
    <property type="entry name" value="PEPTIDYL-TRNA HYDROLASE"/>
    <property type="match status" value="1"/>
</dbReference>
<dbReference type="Pfam" id="PF01195">
    <property type="entry name" value="Pept_tRNA_hydro"/>
    <property type="match status" value="1"/>
</dbReference>
<dbReference type="SUPFAM" id="SSF53178">
    <property type="entry name" value="Peptidyl-tRNA hydrolase-like"/>
    <property type="match status" value="1"/>
</dbReference>
<dbReference type="PROSITE" id="PS01195">
    <property type="entry name" value="PEPT_TRNA_HYDROL_1"/>
    <property type="match status" value="1"/>
</dbReference>
<dbReference type="PROSITE" id="PS01196">
    <property type="entry name" value="PEPT_TRNA_HYDROL_2"/>
    <property type="match status" value="1"/>
</dbReference>
<proteinExistence type="inferred from homology"/>
<keyword id="KW-0963">Cytoplasm</keyword>
<keyword id="KW-0378">Hydrolase</keyword>
<keyword id="KW-1185">Reference proteome</keyword>
<keyword id="KW-0694">RNA-binding</keyword>
<keyword id="KW-0820">tRNA-binding</keyword>
<name>PTH_STRT2</name>
<reference key="1">
    <citation type="journal article" date="2004" name="Nat. Biotechnol.">
        <title>Complete sequence and comparative genome analysis of the dairy bacterium Streptococcus thermophilus.</title>
        <authorList>
            <person name="Bolotin A."/>
            <person name="Quinquis B."/>
            <person name="Renault P."/>
            <person name="Sorokin A."/>
            <person name="Ehrlich S.D."/>
            <person name="Kulakauskas S."/>
            <person name="Lapidus A."/>
            <person name="Goltsman E."/>
            <person name="Mazur M."/>
            <person name="Pusch G.D."/>
            <person name="Fonstein M."/>
            <person name="Overbeek R."/>
            <person name="Kyprides N."/>
            <person name="Purnelle B."/>
            <person name="Prozzi D."/>
            <person name="Ngui K."/>
            <person name="Masuy D."/>
            <person name="Hancy F."/>
            <person name="Burteau S."/>
            <person name="Boutry M."/>
            <person name="Delcour J."/>
            <person name="Goffeau A."/>
            <person name="Hols P."/>
        </authorList>
    </citation>
    <scope>NUCLEOTIDE SEQUENCE [LARGE SCALE GENOMIC DNA]</scope>
    <source>
        <strain>ATCC BAA-250 / LMG 18311</strain>
    </source>
</reference>
<evidence type="ECO:0000255" key="1">
    <source>
        <dbReference type="HAMAP-Rule" id="MF_00083"/>
    </source>
</evidence>
<organism>
    <name type="scientific">Streptococcus thermophilus (strain ATCC BAA-250 / LMG 18311)</name>
    <dbReference type="NCBI Taxonomy" id="264199"/>
    <lineage>
        <taxon>Bacteria</taxon>
        <taxon>Bacillati</taxon>
        <taxon>Bacillota</taxon>
        <taxon>Bacilli</taxon>
        <taxon>Lactobacillales</taxon>
        <taxon>Streptococcaceae</taxon>
        <taxon>Streptococcus</taxon>
    </lineage>
</organism>
<comment type="function">
    <text evidence="1">Hydrolyzes ribosome-free peptidyl-tRNAs (with 1 or more amino acids incorporated), which drop off the ribosome during protein synthesis, or as a result of ribosome stalling.</text>
</comment>
<comment type="function">
    <text evidence="1">Catalyzes the release of premature peptidyl moieties from peptidyl-tRNA molecules trapped in stalled 50S ribosomal subunits, and thus maintains levels of free tRNAs and 50S ribosomes.</text>
</comment>
<comment type="catalytic activity">
    <reaction evidence="1">
        <text>an N-acyl-L-alpha-aminoacyl-tRNA + H2O = an N-acyl-L-amino acid + a tRNA + H(+)</text>
        <dbReference type="Rhea" id="RHEA:54448"/>
        <dbReference type="Rhea" id="RHEA-COMP:10123"/>
        <dbReference type="Rhea" id="RHEA-COMP:13883"/>
        <dbReference type="ChEBI" id="CHEBI:15377"/>
        <dbReference type="ChEBI" id="CHEBI:15378"/>
        <dbReference type="ChEBI" id="CHEBI:59874"/>
        <dbReference type="ChEBI" id="CHEBI:78442"/>
        <dbReference type="ChEBI" id="CHEBI:138191"/>
        <dbReference type="EC" id="3.1.1.29"/>
    </reaction>
</comment>
<comment type="subunit">
    <text evidence="1">Monomer.</text>
</comment>
<comment type="subcellular location">
    <subcellularLocation>
        <location evidence="1">Cytoplasm</location>
    </subcellularLocation>
</comment>
<comment type="similarity">
    <text evidence="1">Belongs to the PTH family.</text>
</comment>
<sequence length="189" mass="21266">MTKLVVGLGNPGSKYHETRHNVGFMAIDLMAKELGLTFSEEKTFKAEVASTFLNGEKVYFVKPTTFMNLSGLAVRALLAYYNIPMEDFIVIYDDLDMEVGKLRFRQKGSAGGHNGIKSIIAETGTQEFDRIKIGIGRPQKGMTVVNHVLGKFSEDDYAMILLTLDKVETALHHYLKTNDFEDTMRRYNG</sequence>
<feature type="chain" id="PRO_0000187835" description="Peptidyl-tRNA hydrolase">
    <location>
        <begin position="1"/>
        <end position="189"/>
    </location>
</feature>
<feature type="active site" description="Proton acceptor" evidence="1">
    <location>
        <position position="20"/>
    </location>
</feature>
<feature type="binding site" evidence="1">
    <location>
        <position position="15"/>
    </location>
    <ligand>
        <name>tRNA</name>
        <dbReference type="ChEBI" id="CHEBI:17843"/>
    </ligand>
</feature>
<feature type="binding site" evidence="1">
    <location>
        <position position="66"/>
    </location>
    <ligand>
        <name>tRNA</name>
        <dbReference type="ChEBI" id="CHEBI:17843"/>
    </ligand>
</feature>
<feature type="binding site" evidence="1">
    <location>
        <position position="68"/>
    </location>
    <ligand>
        <name>tRNA</name>
        <dbReference type="ChEBI" id="CHEBI:17843"/>
    </ligand>
</feature>
<feature type="binding site" evidence="1">
    <location>
        <position position="114"/>
    </location>
    <ligand>
        <name>tRNA</name>
        <dbReference type="ChEBI" id="CHEBI:17843"/>
    </ligand>
</feature>
<feature type="site" description="Discriminates between blocked and unblocked aminoacyl-tRNA" evidence="1">
    <location>
        <position position="10"/>
    </location>
</feature>
<feature type="site" description="Stabilizes the basic form of H active site to accept a proton" evidence="1">
    <location>
        <position position="93"/>
    </location>
</feature>
<accession>Q5M6L4</accession>
<protein>
    <recommendedName>
        <fullName evidence="1">Peptidyl-tRNA hydrolase</fullName>
        <shortName evidence="1">Pth</shortName>
        <ecNumber evidence="1">3.1.1.29</ecNumber>
    </recommendedName>
</protein>